<protein>
    <recommendedName>
        <fullName evidence="1">Protein GrpE</fullName>
    </recommendedName>
    <alternativeName>
        <fullName evidence="1">HSP-70 cofactor</fullName>
    </alternativeName>
</protein>
<organism>
    <name type="scientific">Streptococcus suis (strain 98HAH33)</name>
    <dbReference type="NCBI Taxonomy" id="391296"/>
    <lineage>
        <taxon>Bacteria</taxon>
        <taxon>Bacillati</taxon>
        <taxon>Bacillota</taxon>
        <taxon>Bacilli</taxon>
        <taxon>Lactobacillales</taxon>
        <taxon>Streptococcaceae</taxon>
        <taxon>Streptococcus</taxon>
    </lineage>
</organism>
<feature type="chain" id="PRO_1000053651" description="Protein GrpE">
    <location>
        <begin position="1"/>
        <end position="170"/>
    </location>
</feature>
<feature type="region of interest" description="Disordered" evidence="2">
    <location>
        <begin position="1"/>
        <end position="29"/>
    </location>
</feature>
<feature type="compositionally biased region" description="Acidic residues" evidence="2">
    <location>
        <begin position="10"/>
        <end position="22"/>
    </location>
</feature>
<accession>A4VZB4</accession>
<dbReference type="EMBL" id="CP000408">
    <property type="protein sequence ID" value="ABP91453.1"/>
    <property type="molecule type" value="Genomic_DNA"/>
</dbReference>
<dbReference type="SMR" id="A4VZB4"/>
<dbReference type="KEGG" id="ssv:SSU98_0295"/>
<dbReference type="HOGENOM" id="CLU_057217_6_3_9"/>
<dbReference type="GO" id="GO:0005737">
    <property type="term" value="C:cytoplasm"/>
    <property type="evidence" value="ECO:0007669"/>
    <property type="project" value="UniProtKB-SubCell"/>
</dbReference>
<dbReference type="GO" id="GO:0000774">
    <property type="term" value="F:adenyl-nucleotide exchange factor activity"/>
    <property type="evidence" value="ECO:0007669"/>
    <property type="project" value="InterPro"/>
</dbReference>
<dbReference type="GO" id="GO:0042803">
    <property type="term" value="F:protein homodimerization activity"/>
    <property type="evidence" value="ECO:0007669"/>
    <property type="project" value="InterPro"/>
</dbReference>
<dbReference type="GO" id="GO:0051087">
    <property type="term" value="F:protein-folding chaperone binding"/>
    <property type="evidence" value="ECO:0007669"/>
    <property type="project" value="InterPro"/>
</dbReference>
<dbReference type="GO" id="GO:0051082">
    <property type="term" value="F:unfolded protein binding"/>
    <property type="evidence" value="ECO:0007669"/>
    <property type="project" value="TreeGrafter"/>
</dbReference>
<dbReference type="GO" id="GO:0006457">
    <property type="term" value="P:protein folding"/>
    <property type="evidence" value="ECO:0007669"/>
    <property type="project" value="InterPro"/>
</dbReference>
<dbReference type="CDD" id="cd00446">
    <property type="entry name" value="GrpE"/>
    <property type="match status" value="1"/>
</dbReference>
<dbReference type="FunFam" id="2.30.22.10:FF:000001">
    <property type="entry name" value="Protein GrpE"/>
    <property type="match status" value="1"/>
</dbReference>
<dbReference type="Gene3D" id="3.90.20.20">
    <property type="match status" value="1"/>
</dbReference>
<dbReference type="Gene3D" id="2.30.22.10">
    <property type="entry name" value="Head domain of nucleotide exchange factor GrpE"/>
    <property type="match status" value="1"/>
</dbReference>
<dbReference type="HAMAP" id="MF_01151">
    <property type="entry name" value="GrpE"/>
    <property type="match status" value="1"/>
</dbReference>
<dbReference type="InterPro" id="IPR000740">
    <property type="entry name" value="GrpE"/>
</dbReference>
<dbReference type="InterPro" id="IPR013805">
    <property type="entry name" value="GrpE_coiled_coil"/>
</dbReference>
<dbReference type="InterPro" id="IPR009012">
    <property type="entry name" value="GrpE_head"/>
</dbReference>
<dbReference type="NCBIfam" id="NF010738">
    <property type="entry name" value="PRK14140.1"/>
    <property type="match status" value="1"/>
</dbReference>
<dbReference type="NCBIfam" id="NF010753">
    <property type="entry name" value="PRK14156.1"/>
    <property type="match status" value="1"/>
</dbReference>
<dbReference type="PANTHER" id="PTHR21237">
    <property type="entry name" value="GRPE PROTEIN"/>
    <property type="match status" value="1"/>
</dbReference>
<dbReference type="PANTHER" id="PTHR21237:SF23">
    <property type="entry name" value="GRPE PROTEIN HOMOLOG, MITOCHONDRIAL"/>
    <property type="match status" value="1"/>
</dbReference>
<dbReference type="Pfam" id="PF01025">
    <property type="entry name" value="GrpE"/>
    <property type="match status" value="1"/>
</dbReference>
<dbReference type="PRINTS" id="PR00773">
    <property type="entry name" value="GRPEPROTEIN"/>
</dbReference>
<dbReference type="SUPFAM" id="SSF58014">
    <property type="entry name" value="Coiled-coil domain of nucleotide exchange factor GrpE"/>
    <property type="match status" value="1"/>
</dbReference>
<dbReference type="SUPFAM" id="SSF51064">
    <property type="entry name" value="Head domain of nucleotide exchange factor GrpE"/>
    <property type="match status" value="1"/>
</dbReference>
<dbReference type="PROSITE" id="PS01071">
    <property type="entry name" value="GRPE"/>
    <property type="match status" value="1"/>
</dbReference>
<sequence length="170" mass="19542">MSEEIKNEEIVEEVEATEEVVETPEKSELDLANERAEEFENKYLRAHAEMQNIQRRANEERQTIQRYRSQDLAKKILPSLDNLERALQVEGLTEDVKKGLEMVQESLIQALKEEGVEEVATDVFDPNLHMAIQTVPATDDCPAEHIAQVFQKGYKLHERLLRPAMVVVSE</sequence>
<gene>
    <name evidence="1" type="primary">grpE</name>
    <name type="ordered locus">SSU98_0295</name>
</gene>
<reference key="1">
    <citation type="journal article" date="2007" name="PLoS ONE">
        <title>A glimpse of streptococcal toxic shock syndrome from comparative genomics of S. suis 2 Chinese isolates.</title>
        <authorList>
            <person name="Chen C."/>
            <person name="Tang J."/>
            <person name="Dong W."/>
            <person name="Wang C."/>
            <person name="Feng Y."/>
            <person name="Wang J."/>
            <person name="Zheng F."/>
            <person name="Pan X."/>
            <person name="Liu D."/>
            <person name="Li M."/>
            <person name="Song Y."/>
            <person name="Zhu X."/>
            <person name="Sun H."/>
            <person name="Feng T."/>
            <person name="Guo Z."/>
            <person name="Ju A."/>
            <person name="Ge J."/>
            <person name="Dong Y."/>
            <person name="Sun W."/>
            <person name="Jiang Y."/>
            <person name="Wang J."/>
            <person name="Yan J."/>
            <person name="Yang H."/>
            <person name="Wang X."/>
            <person name="Gao G.F."/>
            <person name="Yang R."/>
            <person name="Wang J."/>
            <person name="Yu J."/>
        </authorList>
    </citation>
    <scope>NUCLEOTIDE SEQUENCE [LARGE SCALE GENOMIC DNA]</scope>
    <source>
        <strain>98HAH33</strain>
    </source>
</reference>
<comment type="function">
    <text evidence="1">Participates actively in the response to hyperosmotic and heat shock by preventing the aggregation of stress-denatured proteins, in association with DnaK and GrpE. It is the nucleotide exchange factor for DnaK and may function as a thermosensor. Unfolded proteins bind initially to DnaJ; upon interaction with the DnaJ-bound protein, DnaK hydrolyzes its bound ATP, resulting in the formation of a stable complex. GrpE releases ADP from DnaK; ATP binding to DnaK triggers the release of the substrate protein, thus completing the reaction cycle. Several rounds of ATP-dependent interactions between DnaJ, DnaK and GrpE are required for fully efficient folding.</text>
</comment>
<comment type="subunit">
    <text evidence="1">Homodimer.</text>
</comment>
<comment type="subcellular location">
    <subcellularLocation>
        <location evidence="1">Cytoplasm</location>
    </subcellularLocation>
</comment>
<comment type="similarity">
    <text evidence="1">Belongs to the GrpE family.</text>
</comment>
<evidence type="ECO:0000255" key="1">
    <source>
        <dbReference type="HAMAP-Rule" id="MF_01151"/>
    </source>
</evidence>
<evidence type="ECO:0000256" key="2">
    <source>
        <dbReference type="SAM" id="MobiDB-lite"/>
    </source>
</evidence>
<proteinExistence type="inferred from homology"/>
<name>GRPE_STRS2</name>
<keyword id="KW-0143">Chaperone</keyword>
<keyword id="KW-0963">Cytoplasm</keyword>
<keyword id="KW-0346">Stress response</keyword>